<evidence type="ECO:0000250" key="1">
    <source>
        <dbReference type="UniProtKB" id="D4A6L0"/>
    </source>
</evidence>
<evidence type="ECO:0000250" key="2">
    <source>
        <dbReference type="UniProtKB" id="Q5T848"/>
    </source>
</evidence>
<evidence type="ECO:0000250" key="3">
    <source>
        <dbReference type="UniProtKB" id="Q8C419"/>
    </source>
</evidence>
<evidence type="ECO:0000255" key="4"/>
<evidence type="ECO:0000256" key="5">
    <source>
        <dbReference type="SAM" id="MobiDB-lite"/>
    </source>
</evidence>
<evidence type="ECO:0000305" key="6"/>
<reference key="1">
    <citation type="journal article" date="2009" name="Genome Biol.">
        <title>A whole-genome assembly of the domestic cow, Bos taurus.</title>
        <authorList>
            <person name="Zimin A.V."/>
            <person name="Delcher A.L."/>
            <person name="Florea L."/>
            <person name="Kelley D.R."/>
            <person name="Schatz M.C."/>
            <person name="Puiu D."/>
            <person name="Hanrahan F."/>
            <person name="Pertea G."/>
            <person name="Van Tassell C.P."/>
            <person name="Sonstegard T.S."/>
            <person name="Marcais G."/>
            <person name="Roberts M."/>
            <person name="Subramanian P."/>
            <person name="Yorke J.A."/>
            <person name="Salzberg S.L."/>
        </authorList>
    </citation>
    <scope>NUCLEOTIDE SEQUENCE [LARGE SCALE GENOMIC DNA]</scope>
    <source>
        <strain>Hereford</strain>
    </source>
</reference>
<keyword id="KW-1003">Cell membrane</keyword>
<keyword id="KW-0966">Cell projection</keyword>
<keyword id="KW-1015">Disulfide bond</keyword>
<keyword id="KW-0297">G-protein coupled receptor</keyword>
<keyword id="KW-0325">Glycoprotein</keyword>
<keyword id="KW-1017">Isopeptide bond</keyword>
<keyword id="KW-0472">Membrane</keyword>
<keyword id="KW-0539">Nucleus</keyword>
<keyword id="KW-0597">Phosphoprotein</keyword>
<keyword id="KW-0628">Postsynaptic cell membrane</keyword>
<keyword id="KW-0675">Receptor</keyword>
<keyword id="KW-1185">Reference proteome</keyword>
<keyword id="KW-0677">Repeat</keyword>
<keyword id="KW-0732">Signal</keyword>
<keyword id="KW-0770">Synapse</keyword>
<keyword id="KW-0807">Transducer</keyword>
<keyword id="KW-0812">Transmembrane</keyword>
<keyword id="KW-1133">Transmembrane helix</keyword>
<keyword id="KW-0832">Ubl conjugation</keyword>
<proteinExistence type="inferred from homology"/>
<accession>E1BBQ2</accession>
<gene>
    <name type="primary">GPR158</name>
</gene>
<protein>
    <recommendedName>
        <fullName evidence="2">Metabotropic glycine receptor</fullName>
        <shortName evidence="2">mGlyR</shortName>
    </recommendedName>
    <alternativeName>
        <fullName evidence="6">G-protein coupled receptor 158</fullName>
    </alternativeName>
</protein>
<sequence length="1216" mass="135363">MGVMAYPFLFCLLLVHFGLGAIGASREAPSRPDPPRERTLRAKQHAQQPARASASDPSAPWSRSTDGTILAQKLAEEVPMDVASYLYTGDSHKLKRANCSSRYELAGLPGKSPALASSHPSLHGALDTLTHATNFLNMMLQSNKSREQNLQDDLEWYQALVRSLLEGEPSISRAAITFSTESLSAPAPQVFLQATREESRILLQDLSSSAHHLANATLETEWFHGLRRKWRTHLHRRGSNQGPRGLGHSWRRRDGLSGDKSHVKWSPPYLECENGSYKPGWLVTLSAAFYGLQPNLVPEFRGVMKVDINLQKVDIDQCSSDGWFSGTHKCHLNNSECMPIKGLGFVLGAYQCICKAGFYHPRDFSFNNFQRRGPDHHFVESAKDVSEEVHVCLPCSEGCPYCADDSPCFVQEDKYLRLAIISFQALCMLLDFLSMLVVYRFRKAKSIRASGLILLETILFGSLLLYFPVVILYFEPSTFRCILLRWVRLLGFATVYGTVTLKLHRVLKVFLSRTAQRIPYMTGGRVMRMLAVILLVVFWFLVGWTSSVCQNLERHISLIGQGRTSDHLIFSMCLVERWDYMTAAAEFLFLLWGVYLCYAVRTVPSAFHEPRYMAVAVHNELIISAIFHTIRFVLASRLQSDWMLMLYFAHTHLTVTVTIGLLLIPKFSHSSNNPRDDIATEAYEDELDMGRSGSYLNSSINSAWSEHSLDPEDIRDELKKLYAQLEIYKRKKMITNNPHLQKKRCSKKGLGRSIMRRITEIPETVSRQCSKEDKDGGEHGSAKGSSAGRKNPQETAGGSGKPKEESLRSRVFSLKKSHSTYEHVREQPGGPGSPPAQSREEEEATDNSVLGSPVGANRPRPLQEDSQAVSTESVPLVCKSASAHNLSSEKKPGPTRTSVLQKSLSVIASAKEKTLGLAGKTQAACVEERAKAQKALPRERETNRKYSNSDNAETQDSAPPNSSHSEEPRKPQKLGIMKQQRANPTTANSDLSPGATHMKDNFDIGEVCPWEIYDLAPGPGPLESKVQKHVSIAASEMERNPTFSLKEKSHPKPKAADLCQQSNPKSVDKAEVCPWESQGQSLFEEEKYLMSKTQVPLGRAQGENSGQHCATGVCAGQCEELPPKAVASKVENENLNQLGEQEKKTSSSERNVPDSHNSSNNFQPPLMSRAEVCPWEFETPDKPNAERSVAFPASSALSANKIAGPRNEEVRLARKV</sequence>
<dbReference type="EMBL" id="DAAA02035487">
    <property type="status" value="NOT_ANNOTATED_CDS"/>
    <property type="molecule type" value="Genomic_DNA"/>
</dbReference>
<dbReference type="EMBL" id="DAAA02035488">
    <property type="status" value="NOT_ANNOTATED_CDS"/>
    <property type="molecule type" value="Genomic_DNA"/>
</dbReference>
<dbReference type="SMR" id="E1BBQ2"/>
<dbReference type="FunCoup" id="E1BBQ2">
    <property type="interactions" value="944"/>
</dbReference>
<dbReference type="STRING" id="9913.ENSBTAP00000032818"/>
<dbReference type="GlyCosmos" id="E1BBQ2">
    <property type="glycosylation" value="5 sites, No reported glycans"/>
</dbReference>
<dbReference type="GlyGen" id="E1BBQ2">
    <property type="glycosylation" value="5 sites"/>
</dbReference>
<dbReference type="PaxDb" id="9913-ENSBTAP00000032818"/>
<dbReference type="eggNOG" id="KOG4418">
    <property type="taxonomic scope" value="Eukaryota"/>
</dbReference>
<dbReference type="HOGENOM" id="CLU_006832_1_0_1"/>
<dbReference type="InParanoid" id="E1BBQ2"/>
<dbReference type="TreeFam" id="TF319114"/>
<dbReference type="Proteomes" id="UP000009136">
    <property type="component" value="Unplaced"/>
</dbReference>
<dbReference type="GO" id="GO:0042995">
    <property type="term" value="C:cell projection"/>
    <property type="evidence" value="ECO:0007669"/>
    <property type="project" value="UniProtKB-KW"/>
</dbReference>
<dbReference type="GO" id="GO:0005634">
    <property type="term" value="C:nucleus"/>
    <property type="evidence" value="ECO:0007669"/>
    <property type="project" value="UniProtKB-SubCell"/>
</dbReference>
<dbReference type="GO" id="GO:0005886">
    <property type="term" value="C:plasma membrane"/>
    <property type="evidence" value="ECO:0000250"/>
    <property type="project" value="UniProtKB"/>
</dbReference>
<dbReference type="GO" id="GO:0045211">
    <property type="term" value="C:postsynaptic membrane"/>
    <property type="evidence" value="ECO:0000250"/>
    <property type="project" value="UniProtKB"/>
</dbReference>
<dbReference type="GO" id="GO:0042734">
    <property type="term" value="C:presynaptic membrane"/>
    <property type="evidence" value="ECO:0007669"/>
    <property type="project" value="UniProtKB-SubCell"/>
</dbReference>
<dbReference type="GO" id="GO:0008047">
    <property type="term" value="F:enzyme activator activity"/>
    <property type="evidence" value="ECO:0000250"/>
    <property type="project" value="UniProtKB"/>
</dbReference>
<dbReference type="GO" id="GO:0160079">
    <property type="term" value="F:G protein-coupled glycine receptor activity"/>
    <property type="evidence" value="ECO:0000250"/>
    <property type="project" value="UniProtKB"/>
</dbReference>
<dbReference type="GO" id="GO:0004888">
    <property type="term" value="F:transmembrane signaling receptor activity"/>
    <property type="evidence" value="ECO:0000250"/>
    <property type="project" value="UniProtKB"/>
</dbReference>
<dbReference type="GO" id="GO:0050890">
    <property type="term" value="P:cognition"/>
    <property type="evidence" value="ECO:0000250"/>
    <property type="project" value="UniProtKB"/>
</dbReference>
<dbReference type="GO" id="GO:0007186">
    <property type="term" value="P:G protein-coupled receptor signaling pathway"/>
    <property type="evidence" value="ECO:0000250"/>
    <property type="project" value="UniProtKB"/>
</dbReference>
<dbReference type="GO" id="GO:0072659">
    <property type="term" value="P:protein localization to plasma membrane"/>
    <property type="evidence" value="ECO:0000250"/>
    <property type="project" value="UniProtKB"/>
</dbReference>
<dbReference type="GO" id="GO:0008277">
    <property type="term" value="P:regulation of G protein-coupled receptor signaling pathway"/>
    <property type="evidence" value="ECO:0000250"/>
    <property type="project" value="UniProtKB"/>
</dbReference>
<dbReference type="GO" id="GO:0050807">
    <property type="term" value="P:regulation of synapse organization"/>
    <property type="evidence" value="ECO:0000250"/>
    <property type="project" value="UniProtKB"/>
</dbReference>
<dbReference type="CDD" id="cd15293">
    <property type="entry name" value="7tmC_GPR158-like"/>
    <property type="match status" value="1"/>
</dbReference>
<dbReference type="Gene3D" id="3.30.450.20">
    <property type="entry name" value="PAS domain"/>
    <property type="match status" value="1"/>
</dbReference>
<dbReference type="InterPro" id="IPR017978">
    <property type="entry name" value="GPCR_3_C"/>
</dbReference>
<dbReference type="InterPro" id="IPR043458">
    <property type="entry name" value="GPR158/179"/>
</dbReference>
<dbReference type="InterPro" id="IPR054714">
    <property type="entry name" value="GPR158_179_extracellular"/>
</dbReference>
<dbReference type="PANTHER" id="PTHR32546">
    <property type="entry name" value="G-PROTEIN COUPLED RECEPTOR 158-RELATED"/>
    <property type="match status" value="1"/>
</dbReference>
<dbReference type="PANTHER" id="PTHR32546:SF11">
    <property type="entry name" value="G-PROTEIN COUPLED RECEPTOR 158-RELATED"/>
    <property type="match status" value="1"/>
</dbReference>
<dbReference type="Pfam" id="PF00003">
    <property type="entry name" value="7tm_3"/>
    <property type="match status" value="1"/>
</dbReference>
<dbReference type="Pfam" id="PF22572">
    <property type="entry name" value="GPR158_179_EC"/>
    <property type="match status" value="1"/>
</dbReference>
<dbReference type="PROSITE" id="PS50259">
    <property type="entry name" value="G_PROTEIN_RECEP_F3_4"/>
    <property type="match status" value="1"/>
</dbReference>
<comment type="function">
    <text evidence="2 3">Metabotropic receptor for glycine that controls synapse formation and function in the brain. Acts as an atypical G-protein coupled receptor that recruits and regulates the RGS7-GNB5 complex instead of activating G proteins. In absence of glycine ligand, promotes the GTPase activator activity of RGS7, increasing the GTPase activity of G protein alpha subunits, thereby driving them into their inactive GDP-bound form. Glycine-binding changes the conformation of the intracellular surface, inhibiting the GTPase activator activity of the RGS7-GNB5 complex, promoting G protein alpha subunits into their active GTP-bound form and regulating cAMP levels. Also able to bind taurine, a compound closely related to glycine, but with a two-fold lower affinity. Glycine receptor-dependent regulation of cAMP controls key ion channels, kinases and neurotrophic factors involved in neuronal excitability and synaptic transmission (By similarity). Plays a pivotal role in regulating mood and cognition via its ability to regulate neuronal excitability in L2/L3 pyramidal neurons of the prefrontal cortex. Also involved in spatial learning by regulating hippocampal CA1 neuronal excitability. Acts as a synaptic organizer in the hippocampus, required for proper mossy fiber-CA3 neurocircuitry establishment, structure and function: induces presynaptic differentiation in contacting axons via its interaction with GPC4. In addition to glycine, may also act as a receptor for osteocalcin (BGLAP) hormone: osteocalcin-binding initiates a signaling response that prevents neuronal apoptosis in the hippocampus and regulates the synthesis of neurotransmitters (By similarity).</text>
</comment>
<comment type="subunit">
    <text evidence="1 2 3">Homodimer. Associates with the RGS7-GNB5 complex, promoting its localization to the cell membrane and regulating its GTPase activator activity. Interacts (via VCPWE motifs) with GNAO1 (By similarity). Interacts with GPC4 (By similarity). Interacts with EGFLAM (By similarity).</text>
</comment>
<comment type="subcellular location">
    <subcellularLocation>
        <location evidence="2">Cell membrane</location>
        <topology evidence="2">Multi-pass membrane protein</topology>
    </subcellularLocation>
    <subcellularLocation>
        <location evidence="3">Postsynaptic cell membrane</location>
        <topology evidence="2">Multi-pass membrane protein</topology>
    </subcellularLocation>
    <subcellularLocation>
        <location evidence="3">Presynaptic cell membrane</location>
        <topology evidence="2">Multi-pass membrane protein</topology>
    </subcellularLocation>
    <subcellularLocation>
        <location evidence="2">Nucleus</location>
    </subcellularLocation>
    <text evidence="2 3">Mainly localizes to the postsynaptic membrane, with a small portion to the presynaptic membrane (By similarity). Trafficks between the nucleus and the cell membrane; it is unclear how a multi-pass membrane protein can traffick between the nucleus and the cell membrane (By similarity).</text>
</comment>
<comment type="domain">
    <text evidence="2">The Cache-like region shares similarity with the Cache domain, a well-known receptor for amino acids. It acts as a ligand-binding module that recognizes and binds glycine and taurine.</text>
</comment>
<comment type="similarity">
    <text evidence="6">Belongs to the G-protein coupled receptor 3 family.</text>
</comment>
<organism>
    <name type="scientific">Bos taurus</name>
    <name type="common">Bovine</name>
    <dbReference type="NCBI Taxonomy" id="9913"/>
    <lineage>
        <taxon>Eukaryota</taxon>
        <taxon>Metazoa</taxon>
        <taxon>Chordata</taxon>
        <taxon>Craniata</taxon>
        <taxon>Vertebrata</taxon>
        <taxon>Euteleostomi</taxon>
        <taxon>Mammalia</taxon>
        <taxon>Eutheria</taxon>
        <taxon>Laurasiatheria</taxon>
        <taxon>Artiodactyla</taxon>
        <taxon>Ruminantia</taxon>
        <taxon>Pecora</taxon>
        <taxon>Bovidae</taxon>
        <taxon>Bovinae</taxon>
        <taxon>Bos</taxon>
    </lineage>
</organism>
<name>MGLYR_BOVIN</name>
<feature type="signal peptide" evidence="4">
    <location>
        <begin position="1"/>
        <end position="23"/>
    </location>
</feature>
<feature type="chain" id="PRO_0000418361" description="Metabotropic glycine receptor">
    <location>
        <begin position="24"/>
        <end position="1216"/>
    </location>
</feature>
<feature type="topological domain" description="Extracellular" evidence="2">
    <location>
        <begin position="24"/>
        <end position="417"/>
    </location>
</feature>
<feature type="transmembrane region" description="Helical; Name=1" evidence="2">
    <location>
        <begin position="418"/>
        <end position="439"/>
    </location>
</feature>
<feature type="topological domain" description="Cytoplasmic" evidence="2">
    <location>
        <begin position="440"/>
        <end position="451"/>
    </location>
</feature>
<feature type="transmembrane region" description="Helical; Name=2" evidence="2">
    <location>
        <begin position="452"/>
        <end position="474"/>
    </location>
</feature>
<feature type="topological domain" description="Extracellular" evidence="2">
    <location>
        <begin position="475"/>
        <end position="478"/>
    </location>
</feature>
<feature type="transmembrane region" description="Helical; Name=3" evidence="2">
    <location>
        <begin position="479"/>
        <end position="501"/>
    </location>
</feature>
<feature type="topological domain" description="Cytoplasmic" evidence="2">
    <location>
        <begin position="502"/>
        <end position="525"/>
    </location>
</feature>
<feature type="transmembrane region" description="Helical; Name=4" evidence="2">
    <location>
        <begin position="526"/>
        <end position="547"/>
    </location>
</feature>
<feature type="topological domain" description="Extracellular" evidence="2">
    <location>
        <begin position="548"/>
        <end position="576"/>
    </location>
</feature>
<feature type="transmembrane region" description="Helical; Name=5" evidence="2">
    <location>
        <begin position="577"/>
        <end position="597"/>
    </location>
</feature>
<feature type="topological domain" description="Cytoplasmic" evidence="2">
    <location>
        <begin position="598"/>
        <end position="611"/>
    </location>
</feature>
<feature type="transmembrane region" description="Helical; Name=6" evidence="2">
    <location>
        <begin position="612"/>
        <end position="633"/>
    </location>
</feature>
<feature type="topological domain" description="Extracellular" evidence="2">
    <location>
        <begin position="634"/>
        <end position="642"/>
    </location>
</feature>
<feature type="transmembrane region" description="Helical; Name=7" evidence="2">
    <location>
        <begin position="643"/>
        <end position="664"/>
    </location>
</feature>
<feature type="topological domain" description="Cytoplasmic" evidence="2">
    <location>
        <begin position="665"/>
        <end position="1216"/>
    </location>
</feature>
<feature type="region of interest" description="Disordered" evidence="5">
    <location>
        <begin position="25"/>
        <end position="65"/>
    </location>
</feature>
<feature type="region of interest" description="Cache-like region" evidence="2">
    <location>
        <begin position="85"/>
        <end position="281"/>
    </location>
</feature>
<feature type="region of interest" description="Disordered" evidence="5">
    <location>
        <begin position="757"/>
        <end position="875"/>
    </location>
</feature>
<feature type="region of interest" description="Disordered" evidence="5">
    <location>
        <begin position="911"/>
        <end position="1000"/>
    </location>
</feature>
<feature type="region of interest" description="Disordered" evidence="5">
    <location>
        <begin position="1038"/>
        <end position="1072"/>
    </location>
</feature>
<feature type="region of interest" description="Disordered" evidence="5">
    <location>
        <begin position="1128"/>
        <end position="1167"/>
    </location>
</feature>
<feature type="short sequence motif" description="VCPWE motif 1" evidence="2">
    <location>
        <begin position="1007"/>
        <end position="1011"/>
    </location>
</feature>
<feature type="short sequence motif" description="VCPWE motif 2" evidence="2">
    <location>
        <begin position="1072"/>
        <end position="1076"/>
    </location>
</feature>
<feature type="short sequence motif" description="VCPWE motif 3" evidence="2">
    <location>
        <begin position="1172"/>
        <end position="1176"/>
    </location>
</feature>
<feature type="compositionally biased region" description="Basic and acidic residues" evidence="5">
    <location>
        <begin position="28"/>
        <end position="40"/>
    </location>
</feature>
<feature type="compositionally biased region" description="Low complexity" evidence="5">
    <location>
        <begin position="46"/>
        <end position="64"/>
    </location>
</feature>
<feature type="compositionally biased region" description="Basic and acidic residues" evidence="5">
    <location>
        <begin position="769"/>
        <end position="781"/>
    </location>
</feature>
<feature type="compositionally biased region" description="Polar residues" evidence="5">
    <location>
        <begin position="864"/>
        <end position="873"/>
    </location>
</feature>
<feature type="compositionally biased region" description="Basic and acidic residues" evidence="5">
    <location>
        <begin position="926"/>
        <end position="944"/>
    </location>
</feature>
<feature type="compositionally biased region" description="Polar residues" evidence="5">
    <location>
        <begin position="945"/>
        <end position="963"/>
    </location>
</feature>
<feature type="compositionally biased region" description="Polar residues" evidence="5">
    <location>
        <begin position="980"/>
        <end position="991"/>
    </location>
</feature>
<feature type="compositionally biased region" description="Basic and acidic residues" evidence="5">
    <location>
        <begin position="1140"/>
        <end position="1153"/>
    </location>
</feature>
<feature type="compositionally biased region" description="Polar residues" evidence="5">
    <location>
        <begin position="1154"/>
        <end position="1163"/>
    </location>
</feature>
<feature type="binding site" evidence="2">
    <location>
        <position position="172"/>
    </location>
    <ligand>
        <name>glycine</name>
        <dbReference type="ChEBI" id="CHEBI:57305"/>
    </ligand>
</feature>
<feature type="binding site" evidence="2">
    <location>
        <position position="173"/>
    </location>
    <ligand>
        <name>glycine</name>
        <dbReference type="ChEBI" id="CHEBI:57305"/>
    </ligand>
</feature>
<feature type="binding site" evidence="2">
    <location>
        <position position="271"/>
    </location>
    <ligand>
        <name>glycine</name>
        <dbReference type="ChEBI" id="CHEBI:57305"/>
    </ligand>
</feature>
<feature type="binding site" evidence="2">
    <location>
        <position position="307"/>
    </location>
    <ligand>
        <name>glycine</name>
        <dbReference type="ChEBI" id="CHEBI:57305"/>
    </ligand>
</feature>
<feature type="modified residue" description="Phosphoserine" evidence="3">
    <location>
        <position position="694"/>
    </location>
</feature>
<feature type="modified residue" description="Phosphoserine" evidence="3">
    <location>
        <position position="705"/>
    </location>
</feature>
<feature type="modified residue" description="Phosphoserine" evidence="3">
    <location>
        <position position="708"/>
    </location>
</feature>
<feature type="modified residue" description="Phosphoserine" evidence="3">
    <location>
        <position position="866"/>
    </location>
</feature>
<feature type="modified residue" description="Phosphoserine" evidence="3">
    <location>
        <position position="947"/>
    </location>
</feature>
<feature type="modified residue" description="Phosphoserine" evidence="3">
    <location>
        <position position="1066"/>
    </location>
</feature>
<feature type="modified residue" description="Phosphoserine" evidence="1">
    <location>
        <position position="1081"/>
    </location>
</feature>
<feature type="glycosylation site" description="N-linked (GlcNAc...) asparagine" evidence="4">
    <location>
        <position position="98"/>
    </location>
</feature>
<feature type="glycosylation site" description="N-linked (GlcNAc...) asparagine" evidence="4">
    <location>
        <position position="143"/>
    </location>
</feature>
<feature type="glycosylation site" description="N-linked (GlcNAc...) asparagine" evidence="4">
    <location>
        <position position="215"/>
    </location>
</feature>
<feature type="glycosylation site" description="N-linked (GlcNAc...) asparagine" evidence="4">
    <location>
        <position position="274"/>
    </location>
</feature>
<feature type="glycosylation site" description="N-linked (GlcNAc...) asparagine" evidence="4">
    <location>
        <position position="333"/>
    </location>
</feature>
<feature type="disulfide bond" evidence="2">
    <location>
        <begin position="99"/>
        <end position="272"/>
    </location>
</feature>
<feature type="disulfide bond" evidence="2">
    <location>
        <begin position="481"/>
        <end position="573"/>
    </location>
</feature>
<feature type="cross-link" description="Glycyl lysine isopeptide (Lys-Gly) (interchain with G-Cter in ubiquitin)" evidence="2">
    <location>
        <position position="774"/>
    </location>
</feature>